<reference key="1">
    <citation type="journal article" date="2002" name="J. Mol. Microbiol. Biotechnol.">
        <title>The genome of Methanosarcina mazei: evidence for lateral gene transfer between Bacteria and Archaea.</title>
        <authorList>
            <person name="Deppenmeier U."/>
            <person name="Johann A."/>
            <person name="Hartsch T."/>
            <person name="Merkl R."/>
            <person name="Schmitz R.A."/>
            <person name="Martinez-Arias R."/>
            <person name="Henne A."/>
            <person name="Wiezer A."/>
            <person name="Baeumer S."/>
            <person name="Jacobi C."/>
            <person name="Brueggemann H."/>
            <person name="Lienard T."/>
            <person name="Christmann A."/>
            <person name="Boemecke M."/>
            <person name="Steckel S."/>
            <person name="Bhattacharyya A."/>
            <person name="Lykidis A."/>
            <person name="Overbeek R."/>
            <person name="Klenk H.-P."/>
            <person name="Gunsalus R.P."/>
            <person name="Fritz H.-J."/>
            <person name="Gottschalk G."/>
        </authorList>
    </citation>
    <scope>NUCLEOTIDE SEQUENCE [LARGE SCALE GENOMIC DNA]</scope>
    <source>
        <strain>ATCC BAA-159 / DSM 3647 / Goe1 / Go1 / JCM 11833 / OCM 88</strain>
    </source>
</reference>
<protein>
    <recommendedName>
        <fullName evidence="1">S-adenosylmethionine synthase</fullName>
        <shortName evidence="1">AdoMet synthase</shortName>
        <ecNumber evidence="1">2.5.1.6</ecNumber>
    </recommendedName>
    <alternativeName>
        <fullName evidence="1">Methionine adenosyltransferase</fullName>
    </alternativeName>
</protein>
<keyword id="KW-0067">ATP-binding</keyword>
<keyword id="KW-0460">Magnesium</keyword>
<keyword id="KW-0547">Nucleotide-binding</keyword>
<keyword id="KW-0554">One-carbon metabolism</keyword>
<keyword id="KW-0808">Transferase</keyword>
<organism>
    <name type="scientific">Methanosarcina mazei (strain ATCC BAA-159 / DSM 3647 / Goe1 / Go1 / JCM 11833 / OCM 88)</name>
    <name type="common">Methanosarcina frisia</name>
    <dbReference type="NCBI Taxonomy" id="192952"/>
    <lineage>
        <taxon>Archaea</taxon>
        <taxon>Methanobacteriati</taxon>
        <taxon>Methanobacteriota</taxon>
        <taxon>Stenosarchaea group</taxon>
        <taxon>Methanomicrobia</taxon>
        <taxon>Methanosarcinales</taxon>
        <taxon>Methanosarcinaceae</taxon>
        <taxon>Methanosarcina</taxon>
    </lineage>
</organism>
<feature type="chain" id="PRO_0000150030" description="S-adenosylmethionine synthase">
    <location>
        <begin position="1"/>
        <end position="398"/>
    </location>
</feature>
<feature type="binding site" evidence="1">
    <location>
        <begin position="136"/>
        <end position="141"/>
    </location>
    <ligand>
        <name>ATP</name>
        <dbReference type="ChEBI" id="CHEBI:30616"/>
    </ligand>
</feature>
<dbReference type="EC" id="2.5.1.6" evidence="1"/>
<dbReference type="EMBL" id="AE008384">
    <property type="protein sequence ID" value="AAM31198.1"/>
    <property type="molecule type" value="Genomic_DNA"/>
</dbReference>
<dbReference type="RefSeq" id="WP_011033448.1">
    <property type="nucleotide sequence ID" value="NC_003901.1"/>
</dbReference>
<dbReference type="SMR" id="Q8PWS4"/>
<dbReference type="KEGG" id="mma:MM_1502"/>
<dbReference type="PATRIC" id="fig|192952.21.peg.1734"/>
<dbReference type="eggNOG" id="arCOG01678">
    <property type="taxonomic scope" value="Archaea"/>
</dbReference>
<dbReference type="HOGENOM" id="CLU_057642_0_0_2"/>
<dbReference type="UniPathway" id="UPA00315">
    <property type="reaction ID" value="UER00080"/>
</dbReference>
<dbReference type="Proteomes" id="UP000000595">
    <property type="component" value="Chromosome"/>
</dbReference>
<dbReference type="GO" id="GO:0005524">
    <property type="term" value="F:ATP binding"/>
    <property type="evidence" value="ECO:0007669"/>
    <property type="project" value="UniProtKB-UniRule"/>
</dbReference>
<dbReference type="GO" id="GO:0000287">
    <property type="term" value="F:magnesium ion binding"/>
    <property type="evidence" value="ECO:0007669"/>
    <property type="project" value="UniProtKB-UniRule"/>
</dbReference>
<dbReference type="GO" id="GO:0004478">
    <property type="term" value="F:methionine adenosyltransferase activity"/>
    <property type="evidence" value="ECO:0007669"/>
    <property type="project" value="UniProtKB-UniRule"/>
</dbReference>
<dbReference type="GO" id="GO:0006730">
    <property type="term" value="P:one-carbon metabolic process"/>
    <property type="evidence" value="ECO:0007669"/>
    <property type="project" value="UniProtKB-KW"/>
</dbReference>
<dbReference type="GO" id="GO:0006556">
    <property type="term" value="P:S-adenosylmethionine biosynthetic process"/>
    <property type="evidence" value="ECO:0007669"/>
    <property type="project" value="UniProtKB-UniRule"/>
</dbReference>
<dbReference type="Gene3D" id="3.30.300.10">
    <property type="match status" value="1"/>
</dbReference>
<dbReference type="Gene3D" id="3.30.300.280">
    <property type="entry name" value="S-adenosylmethionine synthetase, C-terminal domain"/>
    <property type="match status" value="1"/>
</dbReference>
<dbReference type="HAMAP" id="MF_00136">
    <property type="entry name" value="S_AdoMet_synth2"/>
    <property type="match status" value="1"/>
</dbReference>
<dbReference type="InterPro" id="IPR027790">
    <property type="entry name" value="AdoMet_synthase_2_family"/>
</dbReference>
<dbReference type="InterPro" id="IPR042544">
    <property type="entry name" value="AdoMet_synthase_3"/>
</dbReference>
<dbReference type="InterPro" id="IPR002795">
    <property type="entry name" value="S-AdoMet_synthetase_arc"/>
</dbReference>
<dbReference type="NCBIfam" id="NF003364">
    <property type="entry name" value="PRK04439.1-3"/>
    <property type="match status" value="1"/>
</dbReference>
<dbReference type="NCBIfam" id="NF003366">
    <property type="entry name" value="PRK04439.1-5"/>
    <property type="match status" value="1"/>
</dbReference>
<dbReference type="PANTHER" id="PTHR36697">
    <property type="entry name" value="S-ADENOSYLMETHIONINE SYNTHASE"/>
    <property type="match status" value="1"/>
</dbReference>
<dbReference type="PANTHER" id="PTHR36697:SF1">
    <property type="entry name" value="S-ADENOSYLMETHIONINE SYNTHASE"/>
    <property type="match status" value="1"/>
</dbReference>
<dbReference type="Pfam" id="PF01941">
    <property type="entry name" value="AdoMet_Synthase"/>
    <property type="match status" value="1"/>
</dbReference>
<name>METK_METMA</name>
<gene>
    <name evidence="1" type="primary">mat</name>
    <name type="ordered locus">MM_1502</name>
</gene>
<evidence type="ECO:0000255" key="1">
    <source>
        <dbReference type="HAMAP-Rule" id="MF_00136"/>
    </source>
</evidence>
<sequence length="398" mass="43932">MARNIKVEELLQTPIEKQQIELVERKGIGHPDSISDGLAEAVSRALCREYITKCGAVLHHNTDETQIVAGRSSPKFGGGEVLQPIYMLLVGRATKEFEGAELATESVALKAARNYLRNTMVNMDLERDVIIDCKLGTGSSDLRDVFKRDRVPMANDTSFGVGHAPFSELENIVYNTERQLLTDLKSRMPAIGEDMKIMGLRDGDDISLTICSGMIGRYVDDLDSYINMTQEMKTYTEELAARYTERNVNVFVNTADNLKASCVFLTVTGTSAEMGDDGSVGRGNRCNGLITPNRPMSMEATSGKNPINHIGKIYNLLSTQMARDIVKQVPDVQDVYIRLLSQIGKPIDQPLVASAQIIPKEGTSFANVKSEAEVVIDDWLSNVTKITEMVIRGELNTF</sequence>
<accession>Q8PWS4</accession>
<proteinExistence type="inferred from homology"/>
<comment type="function">
    <text evidence="1">Catalyzes the formation of S-adenosylmethionine from methionine and ATP.</text>
</comment>
<comment type="catalytic activity">
    <reaction evidence="1">
        <text>L-methionine + ATP + H2O = S-adenosyl-L-methionine + phosphate + diphosphate</text>
        <dbReference type="Rhea" id="RHEA:21080"/>
        <dbReference type="ChEBI" id="CHEBI:15377"/>
        <dbReference type="ChEBI" id="CHEBI:30616"/>
        <dbReference type="ChEBI" id="CHEBI:33019"/>
        <dbReference type="ChEBI" id="CHEBI:43474"/>
        <dbReference type="ChEBI" id="CHEBI:57844"/>
        <dbReference type="ChEBI" id="CHEBI:59789"/>
        <dbReference type="EC" id="2.5.1.6"/>
    </reaction>
</comment>
<comment type="cofactor">
    <cofactor evidence="1">
        <name>Mg(2+)</name>
        <dbReference type="ChEBI" id="CHEBI:18420"/>
    </cofactor>
</comment>
<comment type="pathway">
    <text evidence="1">Amino-acid biosynthesis; S-adenosyl-L-methionine biosynthesis; S-adenosyl-L-methionine from L-methionine: step 1/1.</text>
</comment>
<comment type="similarity">
    <text evidence="1">Belongs to the AdoMet synthase 2 family.</text>
</comment>